<geneLocation type="mitochondrion"/>
<evidence type="ECO:0000250" key="1">
    <source>
        <dbReference type="UniProtKB" id="P00403"/>
    </source>
</evidence>
<evidence type="ECO:0000250" key="2">
    <source>
        <dbReference type="UniProtKB" id="P00406"/>
    </source>
</evidence>
<evidence type="ECO:0000250" key="3">
    <source>
        <dbReference type="UniProtKB" id="P00410"/>
    </source>
</evidence>
<evidence type="ECO:0000250" key="4">
    <source>
        <dbReference type="UniProtKB" id="P68530"/>
    </source>
</evidence>
<evidence type="ECO:0000305" key="5"/>
<comment type="function">
    <text evidence="3">Component of the cytochrome c oxidase, the last enzyme in the mitochondrial electron transport chain which drives oxidative phosphorylation. The respiratory chain contains 3 multisubunit complexes succinate dehydrogenase (complex II, CII), ubiquinol-cytochrome c oxidoreductase (cytochrome b-c1 complex, complex III, CIII) and cytochrome c oxidase (complex IV, CIV), that cooperate to transfer electrons derived from NADH and succinate to molecular oxygen, creating an electrochemical gradient over the inner membrane that drives transmembrane transport and the ATP synthase. Cytochrome c oxidase is the component of the respiratory chain that catalyzes the reduction of oxygen to water. Electrons originating from reduced cytochrome c in the intermembrane space (IMS) are transferred via the dinuclear copper A center (CU(A)) of subunit 2 and heme A of subunit 1 to the active site in subunit 1, a binuclear center (BNC) formed by heme A3 and copper B (CU(B)). The BNC reduces molecular oxygen to 2 water molecules using 4 electrons from cytochrome c in the IMS and 4 protons from the mitochondrial matrix.</text>
</comment>
<comment type="catalytic activity">
    <reaction evidence="3">
        <text>4 Fe(II)-[cytochrome c] + O2 + 8 H(+)(in) = 4 Fe(III)-[cytochrome c] + 2 H2O + 4 H(+)(out)</text>
        <dbReference type="Rhea" id="RHEA:11436"/>
        <dbReference type="Rhea" id="RHEA-COMP:10350"/>
        <dbReference type="Rhea" id="RHEA-COMP:14399"/>
        <dbReference type="ChEBI" id="CHEBI:15377"/>
        <dbReference type="ChEBI" id="CHEBI:15378"/>
        <dbReference type="ChEBI" id="CHEBI:15379"/>
        <dbReference type="ChEBI" id="CHEBI:29033"/>
        <dbReference type="ChEBI" id="CHEBI:29034"/>
        <dbReference type="EC" id="7.1.1.9"/>
    </reaction>
    <physiologicalReaction direction="left-to-right" evidence="3">
        <dbReference type="Rhea" id="RHEA:11437"/>
    </physiologicalReaction>
</comment>
<comment type="cofactor">
    <cofactor evidence="4">
        <name>Cu cation</name>
        <dbReference type="ChEBI" id="CHEBI:23378"/>
    </cofactor>
    <text evidence="4">Binds a dinuclear copper A center per subunit.</text>
</comment>
<comment type="subunit">
    <text evidence="1 4">Component of the cytochrome c oxidase (complex IV, CIV), a multisubunit enzyme composed of 14 subunits. The complex is composed of a catalytic core of 3 subunits MT-CO1, MT-CO2 and MT-CO3, encoded in the mitochondrial DNA, and 11 supernumerary subunits COX4I, COX5A, COX5B, COX6A, COX6B, COX6C, COX7A, COX7B, COX7C, COX8 and NDUFA4, which are encoded in the nuclear genome. The complex exists as a monomer or a dimer and forms supercomplexes (SCs) in the inner mitochondrial membrane with NADH-ubiquinone oxidoreductase (complex I, CI) and ubiquinol-cytochrome c oxidoreductase (cytochrome b-c1 complex, complex III, CIII), resulting in different assemblies (supercomplex SCI(1)III(2)IV(1) and megacomplex MCI(2)III(2)IV(2)) (By similarity). Found in a complex with TMEM177, COA6, COX18, COX20, SCO1 and SCO2. Interacts with TMEM177 in a COX20-dependent manner. Interacts with COX20. Interacts with COX16 (By similarity).</text>
</comment>
<comment type="subcellular location">
    <subcellularLocation>
        <location evidence="4">Mitochondrion inner membrane</location>
        <topology evidence="4">Multi-pass membrane protein</topology>
    </subcellularLocation>
</comment>
<comment type="similarity">
    <text evidence="5">Belongs to the cytochrome c oxidase subunit 2 family.</text>
</comment>
<reference key="1">
    <citation type="journal article" date="2005" name="Mol. Phylogenet. Evol.">
        <title>Multigene phylogeny of the Old World mice, Murinae, reveals distinct geographic lineages and the declining utility of mitochondrial genes compared to nuclear genes.</title>
        <authorList>
            <person name="Steppan S.J."/>
            <person name="Adkins R.M."/>
            <person name="Spinks P.Q."/>
            <person name="Hale C."/>
        </authorList>
    </citation>
    <scope>NUCLEOTIDE SEQUENCE [GENOMIC DNA]</scope>
</reference>
<feature type="chain" id="PRO_0000254915" description="Cytochrome c oxidase subunit 2">
    <location>
        <begin position="1"/>
        <end position="227"/>
    </location>
</feature>
<feature type="topological domain" description="Mitochondrial intermembrane" evidence="4">
    <location>
        <begin position="1"/>
        <end position="14"/>
    </location>
</feature>
<feature type="transmembrane region" description="Helical; Name=I" evidence="4">
    <location>
        <begin position="15"/>
        <end position="45"/>
    </location>
</feature>
<feature type="topological domain" description="Mitochondrial matrix" evidence="4">
    <location>
        <begin position="46"/>
        <end position="59"/>
    </location>
</feature>
<feature type="transmembrane region" description="Helical; Name=II" evidence="4">
    <location>
        <begin position="60"/>
        <end position="87"/>
    </location>
</feature>
<feature type="topological domain" description="Mitochondrial intermembrane" evidence="4">
    <location>
        <begin position="88"/>
        <end position="227"/>
    </location>
</feature>
<feature type="binding site" evidence="4">
    <location>
        <position position="161"/>
    </location>
    <ligand>
        <name>Cu cation</name>
        <dbReference type="ChEBI" id="CHEBI:23378"/>
        <label>A1</label>
    </ligand>
</feature>
<feature type="binding site" evidence="4">
    <location>
        <position position="196"/>
    </location>
    <ligand>
        <name>Cu cation</name>
        <dbReference type="ChEBI" id="CHEBI:23378"/>
        <label>A1</label>
    </ligand>
</feature>
<feature type="binding site" evidence="4">
    <location>
        <position position="196"/>
    </location>
    <ligand>
        <name>Cu cation</name>
        <dbReference type="ChEBI" id="CHEBI:23378"/>
        <label>A2</label>
    </ligand>
</feature>
<feature type="binding site" evidence="4">
    <location>
        <position position="198"/>
    </location>
    <ligand>
        <name>Cu cation</name>
        <dbReference type="ChEBI" id="CHEBI:23378"/>
        <label>A2</label>
    </ligand>
</feature>
<feature type="binding site" evidence="4">
    <location>
        <position position="198"/>
    </location>
    <ligand>
        <name>Mg(2+)</name>
        <dbReference type="ChEBI" id="CHEBI:18420"/>
        <note>ligand shared with MT-CO1</note>
    </ligand>
</feature>
<feature type="binding site" evidence="4">
    <location>
        <position position="200"/>
    </location>
    <ligand>
        <name>Cu cation</name>
        <dbReference type="ChEBI" id="CHEBI:23378"/>
        <label>A1</label>
    </ligand>
</feature>
<feature type="binding site" evidence="4">
    <location>
        <position position="200"/>
    </location>
    <ligand>
        <name>Cu cation</name>
        <dbReference type="ChEBI" id="CHEBI:23378"/>
        <label>A2</label>
    </ligand>
</feature>
<feature type="binding site" evidence="4">
    <location>
        <position position="204"/>
    </location>
    <ligand>
        <name>Cu cation</name>
        <dbReference type="ChEBI" id="CHEBI:23378"/>
        <label>A2</label>
    </ligand>
</feature>
<feature type="binding site" evidence="4">
    <location>
        <position position="207"/>
    </location>
    <ligand>
        <name>Cu cation</name>
        <dbReference type="ChEBI" id="CHEBI:23378"/>
        <label>A1</label>
    </ligand>
</feature>
<feature type="modified residue" description="Phosphotyrosine" evidence="2">
    <location>
        <position position="218"/>
    </location>
</feature>
<proteinExistence type="inferred from homology"/>
<name>COX2_ARVSO</name>
<organism>
    <name type="scientific">Arvicanthis somalicus</name>
    <name type="common">Neumann's grass rat</name>
    <name type="synonym">Somali grass rat</name>
    <dbReference type="NCBI Taxonomy" id="61157"/>
    <lineage>
        <taxon>Eukaryota</taxon>
        <taxon>Metazoa</taxon>
        <taxon>Chordata</taxon>
        <taxon>Craniata</taxon>
        <taxon>Vertebrata</taxon>
        <taxon>Euteleostomi</taxon>
        <taxon>Mammalia</taxon>
        <taxon>Eutheria</taxon>
        <taxon>Euarchontoglires</taxon>
        <taxon>Glires</taxon>
        <taxon>Rodentia</taxon>
        <taxon>Myomorpha</taxon>
        <taxon>Muroidea</taxon>
        <taxon>Muridae</taxon>
        <taxon>Murinae</taxon>
        <taxon>Arvicanthis</taxon>
    </lineage>
</organism>
<protein>
    <recommendedName>
        <fullName>Cytochrome c oxidase subunit 2</fullName>
        <ecNumber>7.1.1.9</ecNumber>
    </recommendedName>
    <alternativeName>
        <fullName>Cytochrome c oxidase polypeptide II</fullName>
    </alternativeName>
</protein>
<dbReference type="EC" id="7.1.1.9"/>
<dbReference type="EMBL" id="DQ019094">
    <property type="protein sequence ID" value="ABA28374.1"/>
    <property type="molecule type" value="Genomic_DNA"/>
</dbReference>
<dbReference type="SMR" id="Q38S26"/>
<dbReference type="GO" id="GO:0005743">
    <property type="term" value="C:mitochondrial inner membrane"/>
    <property type="evidence" value="ECO:0007669"/>
    <property type="project" value="UniProtKB-SubCell"/>
</dbReference>
<dbReference type="GO" id="GO:0045277">
    <property type="term" value="C:respiratory chain complex IV"/>
    <property type="evidence" value="ECO:0000250"/>
    <property type="project" value="UniProtKB"/>
</dbReference>
<dbReference type="GO" id="GO:0005507">
    <property type="term" value="F:copper ion binding"/>
    <property type="evidence" value="ECO:0007669"/>
    <property type="project" value="InterPro"/>
</dbReference>
<dbReference type="GO" id="GO:0004129">
    <property type="term" value="F:cytochrome-c oxidase activity"/>
    <property type="evidence" value="ECO:0007669"/>
    <property type="project" value="UniProtKB-EC"/>
</dbReference>
<dbReference type="GO" id="GO:0042773">
    <property type="term" value="P:ATP synthesis coupled electron transport"/>
    <property type="evidence" value="ECO:0007669"/>
    <property type="project" value="TreeGrafter"/>
</dbReference>
<dbReference type="CDD" id="cd13912">
    <property type="entry name" value="CcO_II_C"/>
    <property type="match status" value="1"/>
</dbReference>
<dbReference type="FunFam" id="1.10.287.90:FF:000001">
    <property type="entry name" value="Cytochrome c oxidase subunit 2"/>
    <property type="match status" value="1"/>
</dbReference>
<dbReference type="FunFam" id="2.60.40.420:FF:000001">
    <property type="entry name" value="Cytochrome c oxidase subunit 2"/>
    <property type="match status" value="1"/>
</dbReference>
<dbReference type="Gene3D" id="1.10.287.90">
    <property type="match status" value="1"/>
</dbReference>
<dbReference type="Gene3D" id="2.60.40.420">
    <property type="entry name" value="Cupredoxins - blue copper proteins"/>
    <property type="match status" value="1"/>
</dbReference>
<dbReference type="InterPro" id="IPR045187">
    <property type="entry name" value="CcO_II"/>
</dbReference>
<dbReference type="InterPro" id="IPR002429">
    <property type="entry name" value="CcO_II-like_C"/>
</dbReference>
<dbReference type="InterPro" id="IPR034210">
    <property type="entry name" value="CcO_II_C"/>
</dbReference>
<dbReference type="InterPro" id="IPR001505">
    <property type="entry name" value="Copper_CuA"/>
</dbReference>
<dbReference type="InterPro" id="IPR008972">
    <property type="entry name" value="Cupredoxin"/>
</dbReference>
<dbReference type="InterPro" id="IPR014222">
    <property type="entry name" value="Cyt_c_oxidase_su2"/>
</dbReference>
<dbReference type="InterPro" id="IPR011759">
    <property type="entry name" value="Cyt_c_oxidase_su2_TM_dom"/>
</dbReference>
<dbReference type="InterPro" id="IPR036257">
    <property type="entry name" value="Cyt_c_oxidase_su2_TM_sf"/>
</dbReference>
<dbReference type="NCBIfam" id="TIGR02866">
    <property type="entry name" value="CoxB"/>
    <property type="match status" value="1"/>
</dbReference>
<dbReference type="PANTHER" id="PTHR22888:SF9">
    <property type="entry name" value="CYTOCHROME C OXIDASE SUBUNIT 2"/>
    <property type="match status" value="1"/>
</dbReference>
<dbReference type="PANTHER" id="PTHR22888">
    <property type="entry name" value="CYTOCHROME C OXIDASE, SUBUNIT II"/>
    <property type="match status" value="1"/>
</dbReference>
<dbReference type="Pfam" id="PF00116">
    <property type="entry name" value="COX2"/>
    <property type="match status" value="1"/>
</dbReference>
<dbReference type="Pfam" id="PF02790">
    <property type="entry name" value="COX2_TM"/>
    <property type="match status" value="1"/>
</dbReference>
<dbReference type="PRINTS" id="PR01166">
    <property type="entry name" value="CYCOXIDASEII"/>
</dbReference>
<dbReference type="SUPFAM" id="SSF49503">
    <property type="entry name" value="Cupredoxins"/>
    <property type="match status" value="1"/>
</dbReference>
<dbReference type="SUPFAM" id="SSF81464">
    <property type="entry name" value="Cytochrome c oxidase subunit II-like, transmembrane region"/>
    <property type="match status" value="1"/>
</dbReference>
<dbReference type="PROSITE" id="PS00078">
    <property type="entry name" value="COX2"/>
    <property type="match status" value="1"/>
</dbReference>
<dbReference type="PROSITE" id="PS50857">
    <property type="entry name" value="COX2_CUA"/>
    <property type="match status" value="1"/>
</dbReference>
<dbReference type="PROSITE" id="PS50999">
    <property type="entry name" value="COX2_TM"/>
    <property type="match status" value="1"/>
</dbReference>
<gene>
    <name type="primary">MT-CO2</name>
    <name type="synonym">COII</name>
    <name type="synonym">COXII</name>
    <name type="synonym">MTCO2</name>
</gene>
<keyword id="KW-0186">Copper</keyword>
<keyword id="KW-0249">Electron transport</keyword>
<keyword id="KW-0460">Magnesium</keyword>
<keyword id="KW-0472">Membrane</keyword>
<keyword id="KW-0479">Metal-binding</keyword>
<keyword id="KW-0496">Mitochondrion</keyword>
<keyword id="KW-0999">Mitochondrion inner membrane</keyword>
<keyword id="KW-0597">Phosphoprotein</keyword>
<keyword id="KW-0679">Respiratory chain</keyword>
<keyword id="KW-1278">Translocase</keyword>
<keyword id="KW-0812">Transmembrane</keyword>
<keyword id="KW-1133">Transmembrane helix</keyword>
<keyword id="KW-0813">Transport</keyword>
<sequence length="227" mass="25976">MAYPFQLGLQDATSPIMEELTNFHDHTLMIVFLISSLVLYIISLMLTTKLTHTSTMDAQEVETIWTILPAAILILIALPSLRILYMMDEINNPVLTVKTMGHQWYWSYEYTDYEDLCFDSYMIPTNDLKPGELRLLEVDNRVVLPMELPIRMLISSEDVLHSWTVPSLGLKTDAIPGRLNQATLSSNRPGLYYGQCSEICGSNHSFMPIVLEMVPLKYFENWSTSMI</sequence>
<accession>Q38S26</accession>